<proteinExistence type="inferred from homology"/>
<keyword id="KW-0169">Cobalamin biosynthesis</keyword>
<keyword id="KW-0489">Methyltransferase</keyword>
<keyword id="KW-0511">Multifunctional enzyme</keyword>
<keyword id="KW-1185">Reference proteome</keyword>
<keyword id="KW-0949">S-adenosyl-L-methionine</keyword>
<keyword id="KW-0808">Transferase</keyword>
<sequence length="508" mass="53911">MSARGTLWGVGLGPGDPELVTVKAARVIGEADVVAYHSAPHGHSIARGIAEPYLRPGQLEEHLVYPVTTEATNHPGGYAGALEDFYADATERIATHLDAGRNVALLAEGDPLFYSSYMHLHTRLTRRFNAVIVPGVTSVSAASAAVATPLVAGDQVLSVLPGTLPVGELTRRLADADAAVVVKLGRSYHNVREALSASGLLGDAFYVERASTAGQRVLPAADVDETSVPYFSLAMLPGGRRRALLTGTVAVVGLGPGDSDWMTPQSRRELAAATDLIGYRGYLDRVEVRDGQRRHPSDNTDEPARARLACSLADQGRAVAVVSSGDPGVFAMATAVLEEAEQWPGVRVRVIPAMTAAQAVASRVGAPLGHDYAVISLSDRLKPWDVIAARLTAAAAADLVLAIYNPASVTRTWQVGAMRELLLAHRDPGIPVVIGRNVSGPVSGPNEDVRVVKLADLNPAEIDMRCLLIVGSSQTRWYSVDSQDRVFTPRRYPEAGRATATKSSRHSD</sequence>
<dbReference type="EC" id="2.1.1.130"/>
<dbReference type="EC" id="2.1.1.131"/>
<dbReference type="EMBL" id="AE000516">
    <property type="protein sequence ID" value="AAK46406.1"/>
    <property type="molecule type" value="Genomic_DNA"/>
</dbReference>
<dbReference type="PIR" id="E70764">
    <property type="entry name" value="E70764"/>
</dbReference>
<dbReference type="RefSeq" id="WP_003410659.1">
    <property type="nucleotide sequence ID" value="NZ_KK341227.1"/>
</dbReference>
<dbReference type="SMR" id="P9WGB2"/>
<dbReference type="KEGG" id="mtc:MT2126"/>
<dbReference type="PATRIC" id="fig|83331.31.peg.2294"/>
<dbReference type="HOGENOM" id="CLU_029920_1_0_11"/>
<dbReference type="UniPathway" id="UPA00148">
    <property type="reaction ID" value="UER00212"/>
</dbReference>
<dbReference type="UniPathway" id="UPA00148">
    <property type="reaction ID" value="UER00214"/>
</dbReference>
<dbReference type="Proteomes" id="UP000001020">
    <property type="component" value="Chromosome"/>
</dbReference>
<dbReference type="GO" id="GO:0030788">
    <property type="term" value="F:precorrin-2 C20-methyltransferase activity"/>
    <property type="evidence" value="ECO:0007669"/>
    <property type="project" value="UniProtKB-EC"/>
</dbReference>
<dbReference type="GO" id="GO:0030789">
    <property type="term" value="F:precorrin-3B C17-methyltransferase activity"/>
    <property type="evidence" value="ECO:0007669"/>
    <property type="project" value="UniProtKB-EC"/>
</dbReference>
<dbReference type="GO" id="GO:0009236">
    <property type="term" value="P:cobalamin biosynthetic process"/>
    <property type="evidence" value="ECO:0007669"/>
    <property type="project" value="UniProtKB-UniPathway"/>
</dbReference>
<dbReference type="GO" id="GO:0032259">
    <property type="term" value="P:methylation"/>
    <property type="evidence" value="ECO:0007669"/>
    <property type="project" value="UniProtKB-KW"/>
</dbReference>
<dbReference type="CDD" id="cd11645">
    <property type="entry name" value="Precorrin_2_C20_MT"/>
    <property type="match status" value="1"/>
</dbReference>
<dbReference type="CDD" id="cd11646">
    <property type="entry name" value="Precorrin_3B_C17_MT"/>
    <property type="match status" value="1"/>
</dbReference>
<dbReference type="FunFam" id="3.40.1010.10:FF:000009">
    <property type="entry name" value="ATP-binding protein"/>
    <property type="match status" value="1"/>
</dbReference>
<dbReference type="FunFam" id="3.30.950.10:FF:000013">
    <property type="entry name" value="Bifunctional S-adenosyl-L-methionine-precorrin-2 methyl transferase/precorrin-3 methylase"/>
    <property type="match status" value="1"/>
</dbReference>
<dbReference type="FunFam" id="3.30.950.10:FF:000014">
    <property type="entry name" value="Bifunctional S-adenosyl-L-methionine-precorrin-2 methyl transferase/precorrin-3 methylase"/>
    <property type="match status" value="1"/>
</dbReference>
<dbReference type="FunFam" id="3.40.1010.10:FF:000010">
    <property type="entry name" value="Cobalamin biosynthesis protein CobIJ"/>
    <property type="match status" value="1"/>
</dbReference>
<dbReference type="Gene3D" id="3.40.1010.10">
    <property type="entry name" value="Cobalt-precorrin-4 Transmethylase, Domain 1"/>
    <property type="match status" value="2"/>
</dbReference>
<dbReference type="Gene3D" id="3.30.950.10">
    <property type="entry name" value="Methyltransferase, Cobalt-precorrin-4 Transmethylase, Domain 2"/>
    <property type="match status" value="2"/>
</dbReference>
<dbReference type="InterPro" id="IPR000878">
    <property type="entry name" value="4pyrrol_Mease"/>
</dbReference>
<dbReference type="InterPro" id="IPR035996">
    <property type="entry name" value="4pyrrol_Methylase_sf"/>
</dbReference>
<dbReference type="InterPro" id="IPR014777">
    <property type="entry name" value="4pyrrole_Mease_sub1"/>
</dbReference>
<dbReference type="InterPro" id="IPR014776">
    <property type="entry name" value="4pyrrole_Mease_sub2"/>
</dbReference>
<dbReference type="InterPro" id="IPR006363">
    <property type="entry name" value="Cbl_synth_CobJ/CibH_dom"/>
</dbReference>
<dbReference type="InterPro" id="IPR012382">
    <property type="entry name" value="CobI/CbiL"/>
</dbReference>
<dbReference type="InterPro" id="IPR006364">
    <property type="entry name" value="CobI/CbiL/CobIJ_dom"/>
</dbReference>
<dbReference type="InterPro" id="IPR051810">
    <property type="entry name" value="Precorrin_MeTrfase"/>
</dbReference>
<dbReference type="InterPro" id="IPR003043">
    <property type="entry name" value="Uropor_MeTrfase_CS"/>
</dbReference>
<dbReference type="NCBIfam" id="TIGR01467">
    <property type="entry name" value="cobI_cbiL"/>
    <property type="match status" value="1"/>
</dbReference>
<dbReference type="NCBIfam" id="TIGR01466">
    <property type="entry name" value="cobJ_cbiH"/>
    <property type="match status" value="1"/>
</dbReference>
<dbReference type="NCBIfam" id="NF004647">
    <property type="entry name" value="PRK05990.1"/>
    <property type="match status" value="1"/>
</dbReference>
<dbReference type="PANTHER" id="PTHR47036">
    <property type="entry name" value="COBALT-FACTOR III C(17)-METHYLTRANSFERASE-RELATED"/>
    <property type="match status" value="1"/>
</dbReference>
<dbReference type="PANTHER" id="PTHR47036:SF1">
    <property type="entry name" value="COBALT-FACTOR III C(17)-METHYLTRANSFERASE-RELATED"/>
    <property type="match status" value="1"/>
</dbReference>
<dbReference type="Pfam" id="PF00590">
    <property type="entry name" value="TP_methylase"/>
    <property type="match status" value="2"/>
</dbReference>
<dbReference type="SUPFAM" id="SSF53790">
    <property type="entry name" value="Tetrapyrrole methylase"/>
    <property type="match status" value="2"/>
</dbReference>
<dbReference type="PROSITE" id="PS00839">
    <property type="entry name" value="SUMT_1"/>
    <property type="match status" value="1"/>
</dbReference>
<dbReference type="PROSITE" id="PS00840">
    <property type="entry name" value="SUMT_2"/>
    <property type="match status" value="1"/>
</dbReference>
<evidence type="ECO:0000250" key="1"/>
<evidence type="ECO:0000256" key="2">
    <source>
        <dbReference type="SAM" id="MobiDB-lite"/>
    </source>
</evidence>
<evidence type="ECO:0000305" key="3"/>
<name>COBIJ_MYCTO</name>
<accession>P9WGB2</accession>
<accession>L0TB91</accession>
<accession>P66877</accession>
<accession>Q10677</accession>
<feature type="chain" id="PRO_0000428392" description="Cobalamin biosynthesis protein CobIJ">
    <location>
        <begin position="1"/>
        <end position="508"/>
    </location>
</feature>
<feature type="region of interest" description="Precorrin-2 C20-methyltransferase">
    <location>
        <begin position="1"/>
        <end position="243"/>
    </location>
</feature>
<feature type="region of interest" description="Precorrin-3 methylase">
    <location>
        <begin position="244"/>
        <end position="508"/>
    </location>
</feature>
<feature type="region of interest" description="Disordered" evidence="2">
    <location>
        <begin position="489"/>
        <end position="508"/>
    </location>
</feature>
<gene>
    <name type="primary">cobIJ</name>
    <name type="synonym">cobI</name>
    <name type="ordered locus">MT2126</name>
</gene>
<comment type="function">
    <text evidence="1">Methylates precorrin-2 at the C-20 position to produce precorrin-3A.</text>
</comment>
<comment type="catalytic activity">
    <reaction>
        <text>precorrin-2 + S-adenosyl-L-methionine = precorrin-3A + S-adenosyl-L-homocysteine + H(+)</text>
        <dbReference type="Rhea" id="RHEA:16841"/>
        <dbReference type="ChEBI" id="CHEBI:15378"/>
        <dbReference type="ChEBI" id="CHEBI:57856"/>
        <dbReference type="ChEBI" id="CHEBI:58561"/>
        <dbReference type="ChEBI" id="CHEBI:58827"/>
        <dbReference type="ChEBI" id="CHEBI:59789"/>
        <dbReference type="EC" id="2.1.1.130"/>
    </reaction>
</comment>
<comment type="catalytic activity">
    <reaction>
        <text>precorrin-3B + S-adenosyl-L-methionine = precorrin-4 + S-adenosyl-L-homocysteine + 3 H(+)</text>
        <dbReference type="Rhea" id="RHEA:12761"/>
        <dbReference type="ChEBI" id="CHEBI:15378"/>
        <dbReference type="ChEBI" id="CHEBI:57769"/>
        <dbReference type="ChEBI" id="CHEBI:57856"/>
        <dbReference type="ChEBI" id="CHEBI:59789"/>
        <dbReference type="ChEBI" id="CHEBI:77870"/>
        <dbReference type="EC" id="2.1.1.131"/>
    </reaction>
</comment>
<comment type="pathway">
    <text>Cofactor biosynthesis; adenosylcobalamin biosynthesis; cob(II)yrinate a,c-diamide from precorrin-2 (aerobic route): step 1/10.</text>
</comment>
<comment type="pathway">
    <text>Cofactor biosynthesis; adenosylcobalamin biosynthesis; cob(II)yrinate a,c-diamide from precorrin-2 (aerobic route): step 3/10.</text>
</comment>
<comment type="similarity">
    <text evidence="3">Belongs to the precorrin methyltransferase family.</text>
</comment>
<reference key="1">
    <citation type="journal article" date="2002" name="J. Bacteriol.">
        <title>Whole-genome comparison of Mycobacterium tuberculosis clinical and laboratory strains.</title>
        <authorList>
            <person name="Fleischmann R.D."/>
            <person name="Alland D."/>
            <person name="Eisen J.A."/>
            <person name="Carpenter L."/>
            <person name="White O."/>
            <person name="Peterson J.D."/>
            <person name="DeBoy R.T."/>
            <person name="Dodson R.J."/>
            <person name="Gwinn M.L."/>
            <person name="Haft D.H."/>
            <person name="Hickey E.K."/>
            <person name="Kolonay J.F."/>
            <person name="Nelson W.C."/>
            <person name="Umayam L.A."/>
            <person name="Ermolaeva M.D."/>
            <person name="Salzberg S.L."/>
            <person name="Delcher A."/>
            <person name="Utterback T.R."/>
            <person name="Weidman J.F."/>
            <person name="Khouri H.M."/>
            <person name="Gill J."/>
            <person name="Mikula A."/>
            <person name="Bishai W."/>
            <person name="Jacobs W.R. Jr."/>
            <person name="Venter J.C."/>
            <person name="Fraser C.M."/>
        </authorList>
    </citation>
    <scope>NUCLEOTIDE SEQUENCE [LARGE SCALE GENOMIC DNA]</scope>
    <source>
        <strain>CDC 1551 / Oshkosh</strain>
    </source>
</reference>
<organism>
    <name type="scientific">Mycobacterium tuberculosis (strain CDC 1551 / Oshkosh)</name>
    <dbReference type="NCBI Taxonomy" id="83331"/>
    <lineage>
        <taxon>Bacteria</taxon>
        <taxon>Bacillati</taxon>
        <taxon>Actinomycetota</taxon>
        <taxon>Actinomycetes</taxon>
        <taxon>Mycobacteriales</taxon>
        <taxon>Mycobacteriaceae</taxon>
        <taxon>Mycobacterium</taxon>
        <taxon>Mycobacterium tuberculosis complex</taxon>
    </lineage>
</organism>
<protein>
    <recommendedName>
        <fullName>Cobalamin biosynthesis protein CobIJ</fullName>
    </recommendedName>
    <domain>
        <recommendedName>
            <fullName>Precorrin-2 C(20)-methyltransferase</fullName>
            <ecNumber>2.1.1.130</ecNumber>
        </recommendedName>
        <alternativeName>
            <fullName>S-adenosyl-L-methionine--precorrin-2 methyltransferase</fullName>
            <shortName>SP2MT</shortName>
        </alternativeName>
    </domain>
    <domain>
        <recommendedName>
            <fullName>Precorrin-3B C17-methyltransferase</fullName>
            <ecNumber>2.1.1.131</ecNumber>
        </recommendedName>
        <alternativeName>
            <fullName>S-adenosyl-L-methionine--precorrin-3B methyltransferase</fullName>
        </alternativeName>
    </domain>
</protein>